<evidence type="ECO:0000250" key="1"/>
<evidence type="ECO:0000255" key="2"/>
<evidence type="ECO:0000255" key="3">
    <source>
        <dbReference type="PROSITE-ProRule" id="PRU00214"/>
    </source>
</evidence>
<evidence type="ECO:0000256" key="4">
    <source>
        <dbReference type="SAM" id="MobiDB-lite"/>
    </source>
</evidence>
<evidence type="ECO:0000305" key="5"/>
<proteinExistence type="evidence at transcript level"/>
<sequence length="401" mass="44151">MDQSGMEIPVTLIIKAPNQKYSDQTISCFLNWTVGKLKTHLSNVYPSKPLTKDQRLVYSGRLLPDHLQLKDILRKQDEYHMVHLVCASRSPPSSPKSSTDGESHGALASSTNSNSDHSDSTTPSPSQESLSLVAGSSEGLRHRTLPQAQTDPAQSHQFPYVIQGNVDHQFPGQGVPPGFPMYPAFSPLQMLWWQQMYAQQYYMQYQAAVTAQATSSASSAQHAASSPLNLAHVPGEEPPPAPNLVAQENGPENVQMNAQGGPVLNEEDFNRDWLDWVYTFSRAAVLLSIVYFYSSFSRFIMVMGAMLLVYLHQAGWFPFRQEGGQQQAPNNVDANNEGQNANNLELEEMRLMDDGLEDESGEDAGEDASAAQRPGLMASAWSFITTFFTSLIPEGPPQVAN</sequence>
<comment type="function">
    <text evidence="1">Could be involved in the unfolded protein response (UPR) pathway.</text>
</comment>
<comment type="subcellular location">
    <subcellularLocation>
        <location evidence="5">Membrane</location>
        <topology evidence="5">Single-pass membrane protein</topology>
    </subcellularLocation>
</comment>
<organism>
    <name type="scientific">Rattus norvegicus</name>
    <name type="common">Rat</name>
    <dbReference type="NCBI Taxonomy" id="10116"/>
    <lineage>
        <taxon>Eukaryota</taxon>
        <taxon>Metazoa</taxon>
        <taxon>Chordata</taxon>
        <taxon>Craniata</taxon>
        <taxon>Vertebrata</taxon>
        <taxon>Euteleostomi</taxon>
        <taxon>Mammalia</taxon>
        <taxon>Eutheria</taxon>
        <taxon>Euarchontoglires</taxon>
        <taxon>Glires</taxon>
        <taxon>Rodentia</taxon>
        <taxon>Myomorpha</taxon>
        <taxon>Muroidea</taxon>
        <taxon>Muridae</taxon>
        <taxon>Murinae</taxon>
        <taxon>Rattus</taxon>
    </lineage>
</organism>
<reference key="1">
    <citation type="journal article" date="2004" name="Genome Res.">
        <title>The status, quality, and expansion of the NIH full-length cDNA project: the Mammalian Gene Collection (MGC).</title>
        <authorList>
            <consortium name="The MGC Project Team"/>
        </authorList>
    </citation>
    <scope>NUCLEOTIDE SEQUENCE [LARGE SCALE MRNA]</scope>
    <source>
        <tissue>Testis</tissue>
    </source>
</reference>
<protein>
    <recommendedName>
        <fullName>Homocysteine-responsive endoplasmic reticulum-resident ubiquitin-like domain member 2 protein</fullName>
    </recommendedName>
</protein>
<name>HERP2_RAT</name>
<gene>
    <name type="primary">Herpud2</name>
</gene>
<keyword id="KW-0472">Membrane</keyword>
<keyword id="KW-1185">Reference proteome</keyword>
<keyword id="KW-0812">Transmembrane</keyword>
<keyword id="KW-1133">Transmembrane helix</keyword>
<keyword id="KW-0834">Unfolded protein response</keyword>
<feature type="chain" id="PRO_0000280629" description="Homocysteine-responsive endoplasmic reticulum-resident ubiquitin-like domain member 2 protein">
    <location>
        <begin position="1"/>
        <end position="401"/>
    </location>
</feature>
<feature type="transmembrane region" description="Helical" evidence="2">
    <location>
        <begin position="299"/>
        <end position="319"/>
    </location>
</feature>
<feature type="domain" description="Ubiquitin-like" evidence="3">
    <location>
        <begin position="10"/>
        <end position="89"/>
    </location>
</feature>
<feature type="region of interest" description="Disordered" evidence="4">
    <location>
        <begin position="87"/>
        <end position="137"/>
    </location>
</feature>
<feature type="compositionally biased region" description="Low complexity" evidence="4">
    <location>
        <begin position="88"/>
        <end position="98"/>
    </location>
</feature>
<feature type="compositionally biased region" description="Low complexity" evidence="4">
    <location>
        <begin position="109"/>
        <end position="126"/>
    </location>
</feature>
<dbReference type="EMBL" id="BC081861">
    <property type="protein sequence ID" value="AAH81861.1"/>
    <property type="molecule type" value="mRNA"/>
</dbReference>
<dbReference type="RefSeq" id="NP_001020159.1">
    <property type="nucleotide sequence ID" value="NM_001024988.1"/>
</dbReference>
<dbReference type="BMRB" id="Q66HH4"/>
<dbReference type="SMR" id="Q66HH4"/>
<dbReference type="FunCoup" id="Q66HH4">
    <property type="interactions" value="4551"/>
</dbReference>
<dbReference type="STRING" id="10116.ENSRNOP00000049139"/>
<dbReference type="PhosphoSitePlus" id="Q66HH4"/>
<dbReference type="PaxDb" id="10116-ENSRNOP00000049139"/>
<dbReference type="GeneID" id="300463"/>
<dbReference type="KEGG" id="rno:300463"/>
<dbReference type="UCSC" id="RGD:1307343">
    <property type="organism name" value="rat"/>
</dbReference>
<dbReference type="AGR" id="RGD:1307343"/>
<dbReference type="CTD" id="64224"/>
<dbReference type="RGD" id="1307343">
    <property type="gene designation" value="Herpud2"/>
</dbReference>
<dbReference type="VEuPathDB" id="HostDB:ENSRNOG00000029995"/>
<dbReference type="eggNOG" id="KOG4583">
    <property type="taxonomic scope" value="Eukaryota"/>
</dbReference>
<dbReference type="HOGENOM" id="CLU_058243_0_0_1"/>
<dbReference type="InParanoid" id="Q66HH4"/>
<dbReference type="PRO" id="PR:Q66HH4"/>
<dbReference type="Proteomes" id="UP000002494">
    <property type="component" value="Chromosome 8"/>
</dbReference>
<dbReference type="Bgee" id="ENSRNOG00000029995">
    <property type="expression patterns" value="Expressed in testis and 18 other cell types or tissues"/>
</dbReference>
<dbReference type="GO" id="GO:0016020">
    <property type="term" value="C:membrane"/>
    <property type="evidence" value="ECO:0007669"/>
    <property type="project" value="UniProtKB-SubCell"/>
</dbReference>
<dbReference type="GO" id="GO:0030968">
    <property type="term" value="P:endoplasmic reticulum unfolded protein response"/>
    <property type="evidence" value="ECO:0000318"/>
    <property type="project" value="GO_Central"/>
</dbReference>
<dbReference type="GO" id="GO:0007283">
    <property type="term" value="P:spermatogenesis"/>
    <property type="evidence" value="ECO:0000266"/>
    <property type="project" value="RGD"/>
</dbReference>
<dbReference type="CDD" id="cd17119">
    <property type="entry name" value="Ubl_HERP2"/>
    <property type="match status" value="1"/>
</dbReference>
<dbReference type="FunFam" id="3.10.20.90:FF:000046">
    <property type="entry name" value="Homocysteine-responsive endoplasmic reticulum-resident ubiquitin-like domain member 2 protein"/>
    <property type="match status" value="1"/>
</dbReference>
<dbReference type="Gene3D" id="3.10.20.90">
    <property type="entry name" value="Phosphatidylinositol 3-kinase Catalytic Subunit, Chain A, domain 1"/>
    <property type="match status" value="1"/>
</dbReference>
<dbReference type="InterPro" id="IPR039751">
    <property type="entry name" value="HERPUD1/2"/>
</dbReference>
<dbReference type="InterPro" id="IPR000626">
    <property type="entry name" value="Ubiquitin-like_dom"/>
</dbReference>
<dbReference type="InterPro" id="IPR029071">
    <property type="entry name" value="Ubiquitin-like_domsf"/>
</dbReference>
<dbReference type="PANTHER" id="PTHR12943:SF5">
    <property type="entry name" value="HOMOCYSTEINE-RESPONSIVE ENDOPLASMIC RETICULUM-RESIDENT UBIQUITIN-LIKE DOMAIN MEMBER 2 PROTEIN"/>
    <property type="match status" value="1"/>
</dbReference>
<dbReference type="PANTHER" id="PTHR12943">
    <property type="entry name" value="HOMOCYSTEINE-RESPONSIVE ENDOPLASMIC RETICULUM-RESIDENT UNIQUITIN-LIKE DOMAIN HERPUD PROTEIN FAMILY MEMBER"/>
    <property type="match status" value="1"/>
</dbReference>
<dbReference type="Pfam" id="PF00240">
    <property type="entry name" value="ubiquitin"/>
    <property type="match status" value="1"/>
</dbReference>
<dbReference type="SMART" id="SM00213">
    <property type="entry name" value="UBQ"/>
    <property type="match status" value="1"/>
</dbReference>
<dbReference type="SUPFAM" id="SSF54236">
    <property type="entry name" value="Ubiquitin-like"/>
    <property type="match status" value="1"/>
</dbReference>
<dbReference type="PROSITE" id="PS50053">
    <property type="entry name" value="UBIQUITIN_2"/>
    <property type="match status" value="1"/>
</dbReference>
<accession>Q66HH4</accession>